<sequence>METAEKECGALGGLFQAIVNDMKSSYPIWEDFNSKAAKLHSQLRTTVLAAVAFLDAFQKVADMATNTRGATRDIGSALTRMCMRHRSIETKLRQFTNALLESLINPLQERIEDWKKSANQLDKDHAKEYKRARHEIKKKSSDTLKLQKKARKGKGDLQPQLDSALQDVNDMYLLLEETEKQAVRRALIEERGRFCTFITFLQPVVNGELTMLGEITHLQGIIDDLVVLTADPHKLPPASEQVIKDLKGSDYSWSYQTPPSSPSSSNSRKSSMCSLAQPATTRLSSVSSHDSGFVSQDPTYSKPPSPMPSDITSQKSSSSASSEASETCQSVSECSSPTSDWTKAGPHEQPSATTLQRRKDRVEHLRDTEPGPTGGGTVGSSGEEVPRTRMSPATIAAKHGEEVSPAASDLAMVLTRGLSLEHQKSSRDSLQYSSGYSTQTTTPSCSEDTIPSQGSDYDCYSVNGDADSEGPPEFDKSSTIPRNSNIAQNYRRLIQTKRPASTAGLPTAGLPTAMGLPSGAPPGVATIRRTPSTKPTVRRALSSAGPIPIRPPIVPVKTPTVPDSPGYVGPTRAGSEECVFYTDEVASPLAPDLAKASPKRLSLPNTAWGSQSPEVASYGGGAAVGLATEDEEQQLAANRHSLVEKLGELVAGAHALGEGQFPFPTALSATPSEETPTPPPAATSDPPAEDMLVAIRRGVRLRRTVTNDRSAPRIL</sequence>
<feature type="chain" id="PRO_0000319611" description="Protein MTSS 2">
    <location>
        <begin position="1"/>
        <end position="715"/>
    </location>
</feature>
<feature type="domain" description="IMD" evidence="3">
    <location>
        <begin position="1"/>
        <end position="249"/>
    </location>
</feature>
<feature type="domain" description="WH2">
    <location>
        <begin position="687"/>
        <end position="704"/>
    </location>
</feature>
<feature type="region of interest" description="Disordered" evidence="4">
    <location>
        <begin position="253"/>
        <end position="405"/>
    </location>
</feature>
<feature type="region of interest" description="Disordered" evidence="4">
    <location>
        <begin position="420"/>
        <end position="485"/>
    </location>
</feature>
<feature type="region of interest" description="Disordered" evidence="4">
    <location>
        <begin position="527"/>
        <end position="562"/>
    </location>
</feature>
<feature type="region of interest" description="Disordered" evidence="4">
    <location>
        <begin position="661"/>
        <end position="690"/>
    </location>
</feature>
<feature type="coiled-coil region" evidence="2">
    <location>
        <begin position="134"/>
        <end position="156"/>
    </location>
</feature>
<feature type="compositionally biased region" description="Low complexity" evidence="4">
    <location>
        <begin position="253"/>
        <end position="274"/>
    </location>
</feature>
<feature type="compositionally biased region" description="Low complexity" evidence="4">
    <location>
        <begin position="284"/>
        <end position="295"/>
    </location>
</feature>
<feature type="compositionally biased region" description="Low complexity" evidence="4">
    <location>
        <begin position="312"/>
        <end position="330"/>
    </location>
</feature>
<feature type="compositionally biased region" description="Polar residues" evidence="4">
    <location>
        <begin position="331"/>
        <end position="341"/>
    </location>
</feature>
<feature type="compositionally biased region" description="Basic and acidic residues" evidence="4">
    <location>
        <begin position="360"/>
        <end position="369"/>
    </location>
</feature>
<feature type="compositionally biased region" description="Low complexity" evidence="4">
    <location>
        <begin position="429"/>
        <end position="442"/>
    </location>
</feature>
<feature type="compositionally biased region" description="Polar residues" evidence="4">
    <location>
        <begin position="443"/>
        <end position="455"/>
    </location>
</feature>
<feature type="modified residue" description="Phosphothreonine" evidence="7">
    <location>
        <position position="257"/>
    </location>
</feature>
<feature type="modified residue" description="Phosphoserine" evidence="7">
    <location>
        <position position="261"/>
    </location>
</feature>
<feature type="modified residue" description="Phosphoserine" evidence="1">
    <location>
        <position position="404"/>
    </location>
</feature>
<feature type="modified residue" description="Phosphoserine" evidence="1">
    <location>
        <position position="542"/>
    </location>
</feature>
<feature type="modified residue" description="Phosphoserine" evidence="1">
    <location>
        <position position="564"/>
    </location>
</feature>
<feature type="modified residue" description="Phosphoserine" evidence="7">
    <location>
        <position position="575"/>
    </location>
</feature>
<feature type="modified residue" description="Phosphoserine" evidence="1">
    <location>
        <position position="587"/>
    </location>
</feature>
<feature type="modified residue" description="Phosphoserine" evidence="7">
    <location>
        <position position="597"/>
    </location>
</feature>
<feature type="modified residue" description="Phosphoserine" evidence="7">
    <location>
        <position position="602"/>
    </location>
</feature>
<feature type="modified residue" description="Phosphothreonine" evidence="1">
    <location>
        <position position="606"/>
    </location>
</feature>
<gene>
    <name type="primary">Mtss2</name>
    <name evidence="6" type="synonym">Mtss1l</name>
</gene>
<accession>Q6P9S0</accession>
<accession>Q8C7B7</accession>
<organism>
    <name type="scientific">Mus musculus</name>
    <name type="common">Mouse</name>
    <dbReference type="NCBI Taxonomy" id="10090"/>
    <lineage>
        <taxon>Eukaryota</taxon>
        <taxon>Metazoa</taxon>
        <taxon>Chordata</taxon>
        <taxon>Craniata</taxon>
        <taxon>Vertebrata</taxon>
        <taxon>Euteleostomi</taxon>
        <taxon>Mammalia</taxon>
        <taxon>Eutheria</taxon>
        <taxon>Euarchontoglires</taxon>
        <taxon>Glires</taxon>
        <taxon>Rodentia</taxon>
        <taxon>Myomorpha</taxon>
        <taxon>Muroidea</taxon>
        <taxon>Muridae</taxon>
        <taxon>Murinae</taxon>
        <taxon>Mus</taxon>
        <taxon>Mus</taxon>
    </lineage>
</organism>
<proteinExistence type="evidence at protein level"/>
<name>MTSS2_MOUSE</name>
<dbReference type="EMBL" id="BC060632">
    <property type="protein sequence ID" value="AAH60632.1"/>
    <property type="molecule type" value="mRNA"/>
</dbReference>
<dbReference type="EMBL" id="AK052172">
    <property type="protein sequence ID" value="BAC34868.1"/>
    <property type="molecule type" value="mRNA"/>
</dbReference>
<dbReference type="CCDS" id="CCDS22664.1"/>
<dbReference type="RefSeq" id="NP_001297520.1">
    <property type="nucleotide sequence ID" value="NM_001310591.1"/>
</dbReference>
<dbReference type="RefSeq" id="NP_941027.1">
    <property type="nucleotide sequence ID" value="NM_198625.3"/>
</dbReference>
<dbReference type="SMR" id="Q6P9S0"/>
<dbReference type="BioGRID" id="232673">
    <property type="interactions" value="5"/>
</dbReference>
<dbReference type="FunCoup" id="Q6P9S0">
    <property type="interactions" value="561"/>
</dbReference>
<dbReference type="IntAct" id="Q6P9S0">
    <property type="interactions" value="1"/>
</dbReference>
<dbReference type="STRING" id="10090.ENSMUSP00000050211"/>
<dbReference type="GlyGen" id="Q6P9S0">
    <property type="glycosylation" value="6 sites, 1 O-linked glycan (2 sites)"/>
</dbReference>
<dbReference type="iPTMnet" id="Q6P9S0"/>
<dbReference type="PhosphoSitePlus" id="Q6P9S0"/>
<dbReference type="SwissPalm" id="Q6P9S0"/>
<dbReference type="PaxDb" id="10090-ENSMUSP00000050211"/>
<dbReference type="PeptideAtlas" id="Q6P9S0"/>
<dbReference type="ProteomicsDB" id="290115"/>
<dbReference type="Pumba" id="Q6P9S0"/>
<dbReference type="Antibodypedia" id="58925">
    <property type="antibodies" value="27 antibodies from 11 providers"/>
</dbReference>
<dbReference type="Ensembl" id="ENSMUST00000052457.15">
    <property type="protein sequence ID" value="ENSMUSP00000050211.9"/>
    <property type="gene ID" value="ENSMUSG00000033763.15"/>
</dbReference>
<dbReference type="GeneID" id="244654"/>
<dbReference type="KEGG" id="mmu:244654"/>
<dbReference type="UCSC" id="uc009nkx.1">
    <property type="organism name" value="mouse"/>
</dbReference>
<dbReference type="AGR" id="MGI:3039591"/>
<dbReference type="CTD" id="92154"/>
<dbReference type="MGI" id="MGI:3039591">
    <property type="gene designation" value="Mtss2"/>
</dbReference>
<dbReference type="VEuPathDB" id="HostDB:ENSMUSG00000033763"/>
<dbReference type="eggNOG" id="ENOG502QRG4">
    <property type="taxonomic scope" value="Eukaryota"/>
</dbReference>
<dbReference type="GeneTree" id="ENSGT00950000183156"/>
<dbReference type="HOGENOM" id="CLU_004805_2_1_1"/>
<dbReference type="InParanoid" id="Q6P9S0"/>
<dbReference type="OMA" id="WEDFNAK"/>
<dbReference type="OrthoDB" id="10061327at2759"/>
<dbReference type="PhylomeDB" id="Q6P9S0"/>
<dbReference type="TreeFam" id="TF320619"/>
<dbReference type="BioGRID-ORCS" id="244654">
    <property type="hits" value="4 hits in 78 CRISPR screens"/>
</dbReference>
<dbReference type="ChiTaRS" id="Mtss1l">
    <property type="organism name" value="mouse"/>
</dbReference>
<dbReference type="PRO" id="PR:Q6P9S0"/>
<dbReference type="Proteomes" id="UP000000589">
    <property type="component" value="Chromosome 8"/>
</dbReference>
<dbReference type="RNAct" id="Q6P9S0">
    <property type="molecule type" value="protein"/>
</dbReference>
<dbReference type="Bgee" id="ENSMUSG00000033763">
    <property type="expression patterns" value="Expressed in embryonic brain and 208 other cell types or tissues"/>
</dbReference>
<dbReference type="ExpressionAtlas" id="Q6P9S0">
    <property type="expression patterns" value="baseline and differential"/>
</dbReference>
<dbReference type="GO" id="GO:0030864">
    <property type="term" value="C:cortical actin cytoskeleton"/>
    <property type="evidence" value="ECO:0000314"/>
    <property type="project" value="MGI"/>
</dbReference>
<dbReference type="GO" id="GO:0030027">
    <property type="term" value="C:lamellipodium"/>
    <property type="evidence" value="ECO:0000314"/>
    <property type="project" value="MGI"/>
</dbReference>
<dbReference type="GO" id="GO:0005886">
    <property type="term" value="C:plasma membrane"/>
    <property type="evidence" value="ECO:0000314"/>
    <property type="project" value="MGI"/>
</dbReference>
<dbReference type="GO" id="GO:0001726">
    <property type="term" value="C:ruffle"/>
    <property type="evidence" value="ECO:0000314"/>
    <property type="project" value="MGI"/>
</dbReference>
<dbReference type="GO" id="GO:0032587">
    <property type="term" value="C:ruffle membrane"/>
    <property type="evidence" value="ECO:0007669"/>
    <property type="project" value="Ensembl"/>
</dbReference>
<dbReference type="GO" id="GO:0003785">
    <property type="term" value="F:actin monomer binding"/>
    <property type="evidence" value="ECO:0000314"/>
    <property type="project" value="MGI"/>
</dbReference>
<dbReference type="GO" id="GO:0005096">
    <property type="term" value="F:GTPase activator activity"/>
    <property type="evidence" value="ECO:0007669"/>
    <property type="project" value="Ensembl"/>
</dbReference>
<dbReference type="GO" id="GO:0005546">
    <property type="term" value="F:phosphatidylinositol-4,5-bisphosphate binding"/>
    <property type="evidence" value="ECO:0000314"/>
    <property type="project" value="MGI"/>
</dbReference>
<dbReference type="GO" id="GO:0031267">
    <property type="term" value="F:small GTPase binding"/>
    <property type="evidence" value="ECO:0000314"/>
    <property type="project" value="MGI"/>
</dbReference>
<dbReference type="GO" id="GO:0036120">
    <property type="term" value="P:cellular response to platelet-derived growth factor stimulus"/>
    <property type="evidence" value="ECO:0007669"/>
    <property type="project" value="Ensembl"/>
</dbReference>
<dbReference type="GO" id="GO:0097581">
    <property type="term" value="P:lamellipodium organization"/>
    <property type="evidence" value="ECO:0000315"/>
    <property type="project" value="MGI"/>
</dbReference>
<dbReference type="GO" id="GO:0061024">
    <property type="term" value="P:membrane organization"/>
    <property type="evidence" value="ECO:0000314"/>
    <property type="project" value="MGI"/>
</dbReference>
<dbReference type="GO" id="GO:0007009">
    <property type="term" value="P:plasma membrane organization"/>
    <property type="evidence" value="ECO:0007669"/>
    <property type="project" value="InterPro"/>
</dbReference>
<dbReference type="CDD" id="cd07643">
    <property type="entry name" value="I-BAR_IMD_MIM"/>
    <property type="match status" value="1"/>
</dbReference>
<dbReference type="CDD" id="cd22060">
    <property type="entry name" value="WH2_MTSS1"/>
    <property type="match status" value="1"/>
</dbReference>
<dbReference type="FunFam" id="1.20.1270.60:FF:000010">
    <property type="entry name" value="Metastasis suppressor 1, isoform CRA_e"/>
    <property type="match status" value="1"/>
</dbReference>
<dbReference type="Gene3D" id="1.20.1270.60">
    <property type="entry name" value="Arfaptin homology (AH) domain/BAR domain"/>
    <property type="match status" value="1"/>
</dbReference>
<dbReference type="InterPro" id="IPR027267">
    <property type="entry name" value="AH/BAR_dom_sf"/>
</dbReference>
<dbReference type="InterPro" id="IPR013606">
    <property type="entry name" value="I-BAR_dom"/>
</dbReference>
<dbReference type="InterPro" id="IPR030127">
    <property type="entry name" value="MTSS1/MTSS2"/>
</dbReference>
<dbReference type="InterPro" id="IPR003124">
    <property type="entry name" value="WH2_dom"/>
</dbReference>
<dbReference type="PANTHER" id="PTHR15708">
    <property type="entry name" value="ACTIN BUNDLING/MISSING IN METASTASIS-RELATED"/>
    <property type="match status" value="1"/>
</dbReference>
<dbReference type="PANTHER" id="PTHR15708:SF8">
    <property type="entry name" value="PROTEIN MTSS 2"/>
    <property type="match status" value="1"/>
</dbReference>
<dbReference type="Pfam" id="PF08397">
    <property type="entry name" value="IMD"/>
    <property type="match status" value="1"/>
</dbReference>
<dbReference type="Pfam" id="PF02205">
    <property type="entry name" value="WH2"/>
    <property type="match status" value="1"/>
</dbReference>
<dbReference type="SUPFAM" id="SSF103657">
    <property type="entry name" value="BAR/IMD domain-like"/>
    <property type="match status" value="1"/>
</dbReference>
<dbReference type="PROSITE" id="PS51338">
    <property type="entry name" value="IMD"/>
    <property type="match status" value="1"/>
</dbReference>
<comment type="function">
    <text evidence="1">Involved in plasma membrane dynamics. Potentiated PDGF-mediated formation of membrane ruffles and lamellipodia in fibroblasts, acting via RAC1 activation. May function in actin bundling.</text>
</comment>
<comment type="subunit">
    <text evidence="1">Interacts (via IMD domain) with RAC1; this interaction may be important to potentiate PDGF-induced RAC1 activation.</text>
</comment>
<comment type="subcellular location">
    <subcellularLocation>
        <location evidence="1">Cytoplasm</location>
    </subcellularLocation>
    <subcellularLocation>
        <location evidence="1">Cell projection</location>
        <location evidence="1">Ruffle</location>
    </subcellularLocation>
    <text evidence="1">Colocalizes with RAC1 within membrane ruffles.</text>
</comment>
<comment type="similarity">
    <text evidence="5">Belongs to the MTSS family.</text>
</comment>
<keyword id="KW-0009">Actin-binding</keyword>
<keyword id="KW-0966">Cell projection</keyword>
<keyword id="KW-0175">Coiled coil</keyword>
<keyword id="KW-0963">Cytoplasm</keyword>
<keyword id="KW-0597">Phosphoprotein</keyword>
<keyword id="KW-1185">Reference proteome</keyword>
<protein>
    <recommendedName>
        <fullName evidence="5">Protein MTSS 2</fullName>
    </recommendedName>
    <alternativeName>
        <fullName>MTSS1-like protein</fullName>
    </alternativeName>
</protein>
<reference key="1">
    <citation type="journal article" date="2004" name="Genome Res.">
        <title>The status, quality, and expansion of the NIH full-length cDNA project: the Mammalian Gene Collection (MGC).</title>
        <authorList>
            <consortium name="The MGC Project Team"/>
        </authorList>
    </citation>
    <scope>NUCLEOTIDE SEQUENCE [LARGE SCALE MRNA]</scope>
    <source>
        <strain>C57BL/6J</strain>
        <tissue>Brain</tissue>
    </source>
</reference>
<reference key="2">
    <citation type="journal article" date="2005" name="Science">
        <title>The transcriptional landscape of the mammalian genome.</title>
        <authorList>
            <person name="Carninci P."/>
            <person name="Kasukawa T."/>
            <person name="Katayama S."/>
            <person name="Gough J."/>
            <person name="Frith M.C."/>
            <person name="Maeda N."/>
            <person name="Oyama R."/>
            <person name="Ravasi T."/>
            <person name="Lenhard B."/>
            <person name="Wells C."/>
            <person name="Kodzius R."/>
            <person name="Shimokawa K."/>
            <person name="Bajic V.B."/>
            <person name="Brenner S.E."/>
            <person name="Batalov S."/>
            <person name="Forrest A.R."/>
            <person name="Zavolan M."/>
            <person name="Davis M.J."/>
            <person name="Wilming L.G."/>
            <person name="Aidinis V."/>
            <person name="Allen J.E."/>
            <person name="Ambesi-Impiombato A."/>
            <person name="Apweiler R."/>
            <person name="Aturaliya R.N."/>
            <person name="Bailey T.L."/>
            <person name="Bansal M."/>
            <person name="Baxter L."/>
            <person name="Beisel K.W."/>
            <person name="Bersano T."/>
            <person name="Bono H."/>
            <person name="Chalk A.M."/>
            <person name="Chiu K.P."/>
            <person name="Choudhary V."/>
            <person name="Christoffels A."/>
            <person name="Clutterbuck D.R."/>
            <person name="Crowe M.L."/>
            <person name="Dalla E."/>
            <person name="Dalrymple B.P."/>
            <person name="de Bono B."/>
            <person name="Della Gatta G."/>
            <person name="di Bernardo D."/>
            <person name="Down T."/>
            <person name="Engstrom P."/>
            <person name="Fagiolini M."/>
            <person name="Faulkner G."/>
            <person name="Fletcher C.F."/>
            <person name="Fukushima T."/>
            <person name="Furuno M."/>
            <person name="Futaki S."/>
            <person name="Gariboldi M."/>
            <person name="Georgii-Hemming P."/>
            <person name="Gingeras T.R."/>
            <person name="Gojobori T."/>
            <person name="Green R.E."/>
            <person name="Gustincich S."/>
            <person name="Harbers M."/>
            <person name="Hayashi Y."/>
            <person name="Hensch T.K."/>
            <person name="Hirokawa N."/>
            <person name="Hill D."/>
            <person name="Huminiecki L."/>
            <person name="Iacono M."/>
            <person name="Ikeo K."/>
            <person name="Iwama A."/>
            <person name="Ishikawa T."/>
            <person name="Jakt M."/>
            <person name="Kanapin A."/>
            <person name="Katoh M."/>
            <person name="Kawasawa Y."/>
            <person name="Kelso J."/>
            <person name="Kitamura H."/>
            <person name="Kitano H."/>
            <person name="Kollias G."/>
            <person name="Krishnan S.P."/>
            <person name="Kruger A."/>
            <person name="Kummerfeld S.K."/>
            <person name="Kurochkin I.V."/>
            <person name="Lareau L.F."/>
            <person name="Lazarevic D."/>
            <person name="Lipovich L."/>
            <person name="Liu J."/>
            <person name="Liuni S."/>
            <person name="McWilliam S."/>
            <person name="Madan Babu M."/>
            <person name="Madera M."/>
            <person name="Marchionni L."/>
            <person name="Matsuda H."/>
            <person name="Matsuzawa S."/>
            <person name="Miki H."/>
            <person name="Mignone F."/>
            <person name="Miyake S."/>
            <person name="Morris K."/>
            <person name="Mottagui-Tabar S."/>
            <person name="Mulder N."/>
            <person name="Nakano N."/>
            <person name="Nakauchi H."/>
            <person name="Ng P."/>
            <person name="Nilsson R."/>
            <person name="Nishiguchi S."/>
            <person name="Nishikawa S."/>
            <person name="Nori F."/>
            <person name="Ohara O."/>
            <person name="Okazaki Y."/>
            <person name="Orlando V."/>
            <person name="Pang K.C."/>
            <person name="Pavan W.J."/>
            <person name="Pavesi G."/>
            <person name="Pesole G."/>
            <person name="Petrovsky N."/>
            <person name="Piazza S."/>
            <person name="Reed J."/>
            <person name="Reid J.F."/>
            <person name="Ring B.Z."/>
            <person name="Ringwald M."/>
            <person name="Rost B."/>
            <person name="Ruan Y."/>
            <person name="Salzberg S.L."/>
            <person name="Sandelin A."/>
            <person name="Schneider C."/>
            <person name="Schoenbach C."/>
            <person name="Sekiguchi K."/>
            <person name="Semple C.A."/>
            <person name="Seno S."/>
            <person name="Sessa L."/>
            <person name="Sheng Y."/>
            <person name="Shibata Y."/>
            <person name="Shimada H."/>
            <person name="Shimada K."/>
            <person name="Silva D."/>
            <person name="Sinclair B."/>
            <person name="Sperling S."/>
            <person name="Stupka E."/>
            <person name="Sugiura K."/>
            <person name="Sultana R."/>
            <person name="Takenaka Y."/>
            <person name="Taki K."/>
            <person name="Tammoja K."/>
            <person name="Tan S.L."/>
            <person name="Tang S."/>
            <person name="Taylor M.S."/>
            <person name="Tegner J."/>
            <person name="Teichmann S.A."/>
            <person name="Ueda H.R."/>
            <person name="van Nimwegen E."/>
            <person name="Verardo R."/>
            <person name="Wei C.L."/>
            <person name="Yagi K."/>
            <person name="Yamanishi H."/>
            <person name="Zabarovsky E."/>
            <person name="Zhu S."/>
            <person name="Zimmer A."/>
            <person name="Hide W."/>
            <person name="Bult C."/>
            <person name="Grimmond S.M."/>
            <person name="Teasdale R.D."/>
            <person name="Liu E.T."/>
            <person name="Brusic V."/>
            <person name="Quackenbush J."/>
            <person name="Wahlestedt C."/>
            <person name="Mattick J.S."/>
            <person name="Hume D.A."/>
            <person name="Kai C."/>
            <person name="Sasaki D."/>
            <person name="Tomaru Y."/>
            <person name="Fukuda S."/>
            <person name="Kanamori-Katayama M."/>
            <person name="Suzuki M."/>
            <person name="Aoki J."/>
            <person name="Arakawa T."/>
            <person name="Iida J."/>
            <person name="Imamura K."/>
            <person name="Itoh M."/>
            <person name="Kato T."/>
            <person name="Kawaji H."/>
            <person name="Kawagashira N."/>
            <person name="Kawashima T."/>
            <person name="Kojima M."/>
            <person name="Kondo S."/>
            <person name="Konno H."/>
            <person name="Nakano K."/>
            <person name="Ninomiya N."/>
            <person name="Nishio T."/>
            <person name="Okada M."/>
            <person name="Plessy C."/>
            <person name="Shibata K."/>
            <person name="Shiraki T."/>
            <person name="Suzuki S."/>
            <person name="Tagami M."/>
            <person name="Waki K."/>
            <person name="Watahiki A."/>
            <person name="Okamura-Oho Y."/>
            <person name="Suzuki H."/>
            <person name="Kawai J."/>
            <person name="Hayashizaki Y."/>
        </authorList>
    </citation>
    <scope>NUCLEOTIDE SEQUENCE [LARGE SCALE MRNA] OF 315-715</scope>
    <source>
        <strain>C57BL/6J</strain>
        <tissue>Heart</tissue>
    </source>
</reference>
<reference key="3">
    <citation type="journal article" date="2004" name="Mol. Cell. Proteomics">
        <title>Phosphoproteomic analysis of the developing mouse brain.</title>
        <authorList>
            <person name="Ballif B.A."/>
            <person name="Villen J."/>
            <person name="Beausoleil S.A."/>
            <person name="Schwartz D."/>
            <person name="Gygi S.P."/>
        </authorList>
    </citation>
    <scope>IDENTIFICATION BY MASS SPECTROMETRY [LARGE SCALE ANALYSIS]</scope>
    <source>
        <tissue>Embryonic brain</tissue>
    </source>
</reference>
<reference key="4">
    <citation type="journal article" date="2006" name="Mol. Cell. Proteomics">
        <title>Comprehensive identification of phosphorylation sites in postsynaptic density preparations.</title>
        <authorList>
            <person name="Trinidad J.C."/>
            <person name="Specht C.G."/>
            <person name="Thalhammer A."/>
            <person name="Schoepfer R."/>
            <person name="Burlingame A.L."/>
        </authorList>
    </citation>
    <scope>IDENTIFICATION BY MASS SPECTROMETRY [LARGE SCALE ANALYSIS]</scope>
    <source>
        <tissue>Brain</tissue>
    </source>
</reference>
<reference key="5">
    <citation type="journal article" date="2010" name="Cell">
        <title>A tissue-specific atlas of mouse protein phosphorylation and expression.</title>
        <authorList>
            <person name="Huttlin E.L."/>
            <person name="Jedrychowski M.P."/>
            <person name="Elias J.E."/>
            <person name="Goswami T."/>
            <person name="Rad R."/>
            <person name="Beausoleil S.A."/>
            <person name="Villen J."/>
            <person name="Haas W."/>
            <person name="Sowa M.E."/>
            <person name="Gygi S.P."/>
        </authorList>
    </citation>
    <scope>PHOSPHORYLATION [LARGE SCALE ANALYSIS] AT THR-257; SER-261; SER-575; SER-597 AND SER-602</scope>
    <scope>IDENTIFICATION BY MASS SPECTROMETRY [LARGE SCALE ANALYSIS]</scope>
    <source>
        <tissue>Brain</tissue>
        <tissue>Brown adipose tissue</tissue>
        <tissue>Heart</tissue>
        <tissue>Kidney</tissue>
        <tissue>Lung</tissue>
        <tissue>Spleen</tissue>
    </source>
</reference>
<evidence type="ECO:0000250" key="1">
    <source>
        <dbReference type="UniProtKB" id="Q765P7"/>
    </source>
</evidence>
<evidence type="ECO:0000255" key="2"/>
<evidence type="ECO:0000255" key="3">
    <source>
        <dbReference type="PROSITE-ProRule" id="PRU00668"/>
    </source>
</evidence>
<evidence type="ECO:0000256" key="4">
    <source>
        <dbReference type="SAM" id="MobiDB-lite"/>
    </source>
</evidence>
<evidence type="ECO:0000305" key="5"/>
<evidence type="ECO:0000312" key="6">
    <source>
        <dbReference type="MGI" id="MGI:3039591"/>
    </source>
</evidence>
<evidence type="ECO:0007744" key="7">
    <source>
    </source>
</evidence>